<keyword id="KW-0186">Copper</keyword>
<keyword id="KW-1015">Disulfide bond</keyword>
<keyword id="KW-0256">Endoplasmic reticulum</keyword>
<keyword id="KW-0325">Glycoprotein</keyword>
<keyword id="KW-0472">Membrane</keyword>
<keyword id="KW-0479">Metal-binding</keyword>
<keyword id="KW-0503">Monooxygenase</keyword>
<keyword id="KW-0560">Oxidoreductase</keyword>
<keyword id="KW-1185">Reference proteome</keyword>
<keyword id="KW-0732">Signal</keyword>
<keyword id="KW-0812">Transmembrane</keyword>
<keyword id="KW-1133">Transmembrane helix</keyword>
<protein>
    <recommendedName>
        <fullName>DBH-like monooxygenase protein 1</fullName>
        <ecNumber>1.14.17.-</ecNumber>
    </recommendedName>
    <alternativeName>
        <fullName>DBH-related protein</fullName>
    </alternativeName>
    <alternativeName>
        <fullName>Monooxygenase X</fullName>
    </alternativeName>
</protein>
<comment type="cofactor">
    <cofactor evidence="1">
        <name>Cu(2+)</name>
        <dbReference type="ChEBI" id="CHEBI:29036"/>
    </cofactor>
    <text evidence="1">Binds 2 copper ions per subunit.</text>
</comment>
<comment type="subcellular location">
    <subcellularLocation>
        <location evidence="1">Endoplasmic reticulum membrane</location>
        <topology evidence="1">Single-pass type I membrane protein</topology>
    </subcellularLocation>
</comment>
<comment type="developmental stage">
    <text evidence="4">Expressed in neural crest at all developmental stages, and in developing somite and myotome.</text>
</comment>
<comment type="similarity">
    <text evidence="5">Belongs to the copper type II ascorbate-dependent monooxygenase family.</text>
</comment>
<gene>
    <name type="primary">MOXD1</name>
    <name type="synonym">DBHR</name>
    <name type="synonym">MOX</name>
</gene>
<organism>
    <name type="scientific">Gallus gallus</name>
    <name type="common">Chicken</name>
    <dbReference type="NCBI Taxonomy" id="9031"/>
    <lineage>
        <taxon>Eukaryota</taxon>
        <taxon>Metazoa</taxon>
        <taxon>Chordata</taxon>
        <taxon>Craniata</taxon>
        <taxon>Vertebrata</taxon>
        <taxon>Euteleostomi</taxon>
        <taxon>Archelosauria</taxon>
        <taxon>Archosauria</taxon>
        <taxon>Dinosauria</taxon>
        <taxon>Saurischia</taxon>
        <taxon>Theropoda</taxon>
        <taxon>Coelurosauria</taxon>
        <taxon>Aves</taxon>
        <taxon>Neognathae</taxon>
        <taxon>Galloanserae</taxon>
        <taxon>Galliformes</taxon>
        <taxon>Phasianidae</taxon>
        <taxon>Phasianinae</taxon>
        <taxon>Gallus</taxon>
    </lineage>
</organism>
<dbReference type="EC" id="1.14.17.-"/>
<dbReference type="EMBL" id="AF327450">
    <property type="protein sequence ID" value="AAK37507.1"/>
    <property type="molecule type" value="mRNA"/>
</dbReference>
<dbReference type="RefSeq" id="NP_989955.1">
    <property type="nucleotide sequence ID" value="NM_204624.1"/>
</dbReference>
<dbReference type="SMR" id="Q98ST7"/>
<dbReference type="FunCoup" id="Q98ST7">
    <property type="interactions" value="6"/>
</dbReference>
<dbReference type="STRING" id="9031.ENSGALP00000004587"/>
<dbReference type="GlyCosmos" id="Q98ST7">
    <property type="glycosylation" value="4 sites, No reported glycans"/>
</dbReference>
<dbReference type="GlyGen" id="Q98ST7">
    <property type="glycosylation" value="4 sites"/>
</dbReference>
<dbReference type="PaxDb" id="9031-ENSGALP00000004587"/>
<dbReference type="GeneID" id="395333"/>
<dbReference type="KEGG" id="gga:395333"/>
<dbReference type="CTD" id="26002"/>
<dbReference type="VEuPathDB" id="HostDB:geneid_395333"/>
<dbReference type="eggNOG" id="KOG3568">
    <property type="taxonomic scope" value="Eukaryota"/>
</dbReference>
<dbReference type="InParanoid" id="Q98ST7"/>
<dbReference type="OrthoDB" id="10003276at2759"/>
<dbReference type="PhylomeDB" id="Q98ST7"/>
<dbReference type="PRO" id="PR:Q98ST7"/>
<dbReference type="Proteomes" id="UP000000539">
    <property type="component" value="Unassembled WGS sequence"/>
</dbReference>
<dbReference type="GO" id="GO:0005789">
    <property type="term" value="C:endoplasmic reticulum membrane"/>
    <property type="evidence" value="ECO:0007669"/>
    <property type="project" value="UniProtKB-SubCell"/>
</dbReference>
<dbReference type="GO" id="GO:0005615">
    <property type="term" value="C:extracellular space"/>
    <property type="evidence" value="ECO:0000318"/>
    <property type="project" value="GO_Central"/>
</dbReference>
<dbReference type="GO" id="GO:0030667">
    <property type="term" value="C:secretory granule membrane"/>
    <property type="evidence" value="ECO:0000318"/>
    <property type="project" value="GO_Central"/>
</dbReference>
<dbReference type="GO" id="GO:0005507">
    <property type="term" value="F:copper ion binding"/>
    <property type="evidence" value="ECO:0000318"/>
    <property type="project" value="GO_Central"/>
</dbReference>
<dbReference type="GO" id="GO:0004500">
    <property type="term" value="F:dopamine beta-monooxygenase activity"/>
    <property type="evidence" value="ECO:0000318"/>
    <property type="project" value="GO_Central"/>
</dbReference>
<dbReference type="GO" id="GO:0042420">
    <property type="term" value="P:dopamine catabolic process"/>
    <property type="evidence" value="ECO:0000318"/>
    <property type="project" value="GO_Central"/>
</dbReference>
<dbReference type="GO" id="GO:0042421">
    <property type="term" value="P:norepinephrine biosynthetic process"/>
    <property type="evidence" value="ECO:0000318"/>
    <property type="project" value="GO_Central"/>
</dbReference>
<dbReference type="GO" id="GO:0006589">
    <property type="term" value="P:octopamine biosynthetic process"/>
    <property type="evidence" value="ECO:0000318"/>
    <property type="project" value="GO_Central"/>
</dbReference>
<dbReference type="CDD" id="cd09631">
    <property type="entry name" value="DOMON_DOH"/>
    <property type="match status" value="1"/>
</dbReference>
<dbReference type="FunFam" id="2.60.120.310:FF:000002">
    <property type="entry name" value="DBH-like monooxygenase protein 1"/>
    <property type="match status" value="1"/>
</dbReference>
<dbReference type="FunFam" id="2.60.120.230:FF:000001">
    <property type="entry name" value="Monooxygenase, DBH-like 1"/>
    <property type="match status" value="1"/>
</dbReference>
<dbReference type="Gene3D" id="2.60.120.230">
    <property type="match status" value="1"/>
</dbReference>
<dbReference type="Gene3D" id="2.60.120.310">
    <property type="entry name" value="Copper type II, ascorbate-dependent monooxygenase, N-terminal domain"/>
    <property type="match status" value="1"/>
</dbReference>
<dbReference type="InterPro" id="IPR014784">
    <property type="entry name" value="Cu2_ascorb_mOase-like_C"/>
</dbReference>
<dbReference type="InterPro" id="IPR000323">
    <property type="entry name" value="Cu2_ascorb_mOase_N"/>
</dbReference>
<dbReference type="InterPro" id="IPR036939">
    <property type="entry name" value="Cu2_ascorb_mOase_N_sf"/>
</dbReference>
<dbReference type="InterPro" id="IPR024548">
    <property type="entry name" value="Cu2_monoox_C"/>
</dbReference>
<dbReference type="InterPro" id="IPR000945">
    <property type="entry name" value="DBH-like"/>
</dbReference>
<dbReference type="InterPro" id="IPR045266">
    <property type="entry name" value="DOH_DOMON"/>
</dbReference>
<dbReference type="InterPro" id="IPR005018">
    <property type="entry name" value="DOMON_domain"/>
</dbReference>
<dbReference type="InterPro" id="IPR008977">
    <property type="entry name" value="PHM/PNGase_F_dom_sf"/>
</dbReference>
<dbReference type="InterPro" id="IPR028460">
    <property type="entry name" value="Tbh/DBH"/>
</dbReference>
<dbReference type="PANTHER" id="PTHR10157:SF28">
    <property type="entry name" value="DBH-LIKE MONOOXYGENASE PROTEIN 1"/>
    <property type="match status" value="1"/>
</dbReference>
<dbReference type="PANTHER" id="PTHR10157">
    <property type="entry name" value="DOPAMINE BETA HYDROXYLASE RELATED"/>
    <property type="match status" value="1"/>
</dbReference>
<dbReference type="Pfam" id="PF03712">
    <property type="entry name" value="Cu2_monoox_C"/>
    <property type="match status" value="1"/>
</dbReference>
<dbReference type="Pfam" id="PF01082">
    <property type="entry name" value="Cu2_monooxygen"/>
    <property type="match status" value="1"/>
</dbReference>
<dbReference type="Pfam" id="PF03351">
    <property type="entry name" value="DOMON"/>
    <property type="match status" value="1"/>
</dbReference>
<dbReference type="PRINTS" id="PR00767">
    <property type="entry name" value="DBMONOXGNASE"/>
</dbReference>
<dbReference type="SMART" id="SM00664">
    <property type="entry name" value="DoH"/>
    <property type="match status" value="1"/>
</dbReference>
<dbReference type="SUPFAM" id="SSF49742">
    <property type="entry name" value="PHM/PNGase F"/>
    <property type="match status" value="2"/>
</dbReference>
<dbReference type="PROSITE" id="PS50836">
    <property type="entry name" value="DOMON"/>
    <property type="match status" value="1"/>
</dbReference>
<sequence>MRPLRPWALLLGALLGAAAAAARRYPHVAVLDGAAAYRLLWGRRGSALAFRLEVRTRGYVGFGLSAGGGMASADIVVGGVEGGRPYLQDYHTDENRVLKKDPQQDYHLEYAMENSTHTILAFSRELYTCDPNDKSITESTVRVIWAYHHKDLGEAGQNYHGSTRGTKSLRLLNPEKAEVSPASLSYFDLTNKDVPVPDKDTTYWCQMFKIPVQHEKHHVTKVEPLIQKDHENLVHHILLYQCSSNLNDSVLDYGHECYHPNMPDSFFTCETVIFAWAIGGEGFTYPPHVGLSIGTAADPQFVLMEVHYDNPTYTEGLIDNSGLRLFYTPVLRKYDAGVIEAGLWVSLFHNIPPGMPEFVSEGHCTLECLEEALGAERPSGIHVFAVLLHAHLAGRAIRMRHFRNGEEQKLLAYDEEFDFNFQEFQYLEEERTIMPGDNLITECHYSTTDRIRMTWGGLSTRNEMCLSYLLYYPRINLTRCASIPDIMEQLQFIGVKEIYRPVRTWPFIIKSPKQYKNLSFMDAMNKFKWSKSEGLSYNELVLKLPMNVRCSKTDNAEWSFQGMTAFPPEVERPYKTEPVICSSSSCLPCSLSLTLLFVVYVASSTIGNFGPVVQ</sequence>
<reference key="1">
    <citation type="journal article" date="2001" name="Dev. Biol.">
        <title>DBHR, a gene with homology to dopamine beta-hydroxylase, is expressed in the neural crest throughout early development.</title>
        <authorList>
            <person name="Knecht A.K."/>
            <person name="Bronner-Fraser M."/>
        </authorList>
    </citation>
    <scope>NUCLEOTIDE SEQUENCE [MRNA]</scope>
    <scope>DEVELOPMENTAL STAGE</scope>
    <source>
        <tissue>Embryo</tissue>
    </source>
</reference>
<reference key="2">
    <citation type="journal article" date="2004" name="J. Biol. Chem.">
        <title>Monooxygenase X, a member of the copper-dependent monooxygenase family localized to the endoplasmic reticulum.</title>
        <authorList>
            <person name="Xin X."/>
            <person name="Mains R.E."/>
            <person name="Eipper B.A."/>
        </authorList>
    </citation>
    <scope>IDENTIFICATION</scope>
</reference>
<feature type="signal peptide" evidence="2">
    <location>
        <begin position="1"/>
        <end position="22"/>
    </location>
</feature>
<feature type="chain" id="PRO_0000305219" description="DBH-like monooxygenase protein 1">
    <location>
        <begin position="23"/>
        <end position="614"/>
    </location>
</feature>
<feature type="topological domain" description="Lumenal" evidence="2">
    <location>
        <begin position="23"/>
        <end position="592"/>
    </location>
</feature>
<feature type="transmembrane region" description="Helical" evidence="2">
    <location>
        <begin position="593"/>
        <end position="613"/>
    </location>
</feature>
<feature type="domain" description="DOMON" evidence="3">
    <location>
        <begin position="35"/>
        <end position="148"/>
    </location>
</feature>
<feature type="active site" evidence="2">
    <location>
        <position position="203"/>
    </location>
</feature>
<feature type="active site" evidence="2">
    <location>
        <position position="389"/>
    </location>
</feature>
<feature type="binding site" evidence="1">
    <location>
        <position position="235"/>
    </location>
    <ligand>
        <name>Cu cation</name>
        <dbReference type="ChEBI" id="CHEBI:23378"/>
        <label>A</label>
    </ligand>
</feature>
<feature type="binding site" evidence="1">
    <location>
        <position position="236"/>
    </location>
    <ligand>
        <name>Cu cation</name>
        <dbReference type="ChEBI" id="CHEBI:23378"/>
        <label>A</label>
    </ligand>
</feature>
<feature type="binding site" evidence="1">
    <location>
        <position position="307"/>
    </location>
    <ligand>
        <name>Cu cation</name>
        <dbReference type="ChEBI" id="CHEBI:23378"/>
        <label>A</label>
    </ligand>
</feature>
<feature type="binding site" evidence="1">
    <location>
        <position position="389"/>
    </location>
    <ligand>
        <name>Cu cation</name>
        <dbReference type="ChEBI" id="CHEBI:23378"/>
        <label>B</label>
    </ligand>
</feature>
<feature type="binding site" evidence="1">
    <location>
        <position position="391"/>
    </location>
    <ligand>
        <name>Cu cation</name>
        <dbReference type="ChEBI" id="CHEBI:23378"/>
        <label>B</label>
    </ligand>
</feature>
<feature type="binding site" evidence="1">
    <location>
        <position position="464"/>
    </location>
    <ligand>
        <name>Cu cation</name>
        <dbReference type="ChEBI" id="CHEBI:23378"/>
        <label>B</label>
    </ligand>
</feature>
<feature type="glycosylation site" description="N-linked (GlcNAc...) asparagine" evidence="2">
    <location>
        <position position="114"/>
    </location>
</feature>
<feature type="glycosylation site" description="N-linked (GlcNAc...) asparagine" evidence="2">
    <location>
        <position position="247"/>
    </location>
</feature>
<feature type="glycosylation site" description="N-linked (GlcNAc...) asparagine" evidence="2">
    <location>
        <position position="476"/>
    </location>
</feature>
<feature type="glycosylation site" description="N-linked (GlcNAc...) asparagine" evidence="2">
    <location>
        <position position="517"/>
    </location>
</feature>
<feature type="disulfide bond" evidence="1">
    <location>
        <begin position="205"/>
        <end position="257"/>
    </location>
</feature>
<feature type="disulfide bond" evidence="1">
    <location>
        <begin position="242"/>
        <end position="269"/>
    </location>
</feature>
<feature type="disulfide bond" evidence="1">
    <location>
        <begin position="364"/>
        <end position="480"/>
    </location>
</feature>
<feature type="disulfide bond" evidence="1">
    <location>
        <begin position="368"/>
        <end position="550"/>
    </location>
</feature>
<feature type="disulfide bond" evidence="1">
    <location>
        <begin position="443"/>
        <end position="465"/>
    </location>
</feature>
<accession>Q98ST7</accession>
<proteinExistence type="evidence at transcript level"/>
<evidence type="ECO:0000250" key="1"/>
<evidence type="ECO:0000255" key="2"/>
<evidence type="ECO:0000255" key="3">
    <source>
        <dbReference type="PROSITE-ProRule" id="PRU00246"/>
    </source>
</evidence>
<evidence type="ECO:0000269" key="4">
    <source>
    </source>
</evidence>
<evidence type="ECO:0000305" key="5"/>
<name>MOXD1_CHICK</name>